<organism>
    <name type="scientific">Leptospira interrogans serogroup Icterohaemorrhagiae serovar copenhageni (strain Fiocruz L1-130)</name>
    <dbReference type="NCBI Taxonomy" id="267671"/>
    <lineage>
        <taxon>Bacteria</taxon>
        <taxon>Pseudomonadati</taxon>
        <taxon>Spirochaetota</taxon>
        <taxon>Spirochaetia</taxon>
        <taxon>Leptospirales</taxon>
        <taxon>Leptospiraceae</taxon>
        <taxon>Leptospira</taxon>
    </lineage>
</organism>
<comment type="function">
    <text evidence="1">Catalyzes the ATP-dependent conversion of 7-carboxy-7-deazaguanine (CDG) to 7-cyano-7-deazaguanine (preQ(0)).</text>
</comment>
<comment type="catalytic activity">
    <reaction evidence="1">
        <text>7-carboxy-7-deazaguanine + NH4(+) + ATP = 7-cyano-7-deazaguanine + ADP + phosphate + H2O + H(+)</text>
        <dbReference type="Rhea" id="RHEA:27982"/>
        <dbReference type="ChEBI" id="CHEBI:15377"/>
        <dbReference type="ChEBI" id="CHEBI:15378"/>
        <dbReference type="ChEBI" id="CHEBI:28938"/>
        <dbReference type="ChEBI" id="CHEBI:30616"/>
        <dbReference type="ChEBI" id="CHEBI:43474"/>
        <dbReference type="ChEBI" id="CHEBI:45075"/>
        <dbReference type="ChEBI" id="CHEBI:61036"/>
        <dbReference type="ChEBI" id="CHEBI:456216"/>
        <dbReference type="EC" id="6.3.4.20"/>
    </reaction>
</comment>
<comment type="cofactor">
    <cofactor evidence="1">
        <name>Zn(2+)</name>
        <dbReference type="ChEBI" id="CHEBI:29105"/>
    </cofactor>
    <text evidence="1">Binds 1 zinc ion per subunit.</text>
</comment>
<comment type="pathway">
    <text evidence="1">Purine metabolism; 7-cyano-7-deazaguanine biosynthesis.</text>
</comment>
<comment type="similarity">
    <text evidence="1">Belongs to the QueC family.</text>
</comment>
<evidence type="ECO:0000255" key="1">
    <source>
        <dbReference type="HAMAP-Rule" id="MF_01633"/>
    </source>
</evidence>
<evidence type="ECO:0000256" key="2">
    <source>
        <dbReference type="SAM" id="MobiDB-lite"/>
    </source>
</evidence>
<name>QUEC_LEPIC</name>
<dbReference type="EC" id="6.3.4.20" evidence="1"/>
<dbReference type="EMBL" id="AE016823">
    <property type="protein sequence ID" value="AAS68915.1"/>
    <property type="molecule type" value="Genomic_DNA"/>
</dbReference>
<dbReference type="RefSeq" id="WP_001088969.1">
    <property type="nucleotide sequence ID" value="NC_005823.1"/>
</dbReference>
<dbReference type="SMR" id="Q72VK9"/>
<dbReference type="GeneID" id="61143642"/>
<dbReference type="KEGG" id="lic:LIC_10288"/>
<dbReference type="HOGENOM" id="CLU_081854_1_0_12"/>
<dbReference type="UniPathway" id="UPA00391"/>
<dbReference type="Proteomes" id="UP000007037">
    <property type="component" value="Chromosome I"/>
</dbReference>
<dbReference type="GO" id="GO:0005524">
    <property type="term" value="F:ATP binding"/>
    <property type="evidence" value="ECO:0007669"/>
    <property type="project" value="UniProtKB-UniRule"/>
</dbReference>
<dbReference type="GO" id="GO:0016879">
    <property type="term" value="F:ligase activity, forming carbon-nitrogen bonds"/>
    <property type="evidence" value="ECO:0007669"/>
    <property type="project" value="UniProtKB-UniRule"/>
</dbReference>
<dbReference type="GO" id="GO:0008270">
    <property type="term" value="F:zinc ion binding"/>
    <property type="evidence" value="ECO:0007669"/>
    <property type="project" value="UniProtKB-UniRule"/>
</dbReference>
<dbReference type="GO" id="GO:0008616">
    <property type="term" value="P:queuosine biosynthetic process"/>
    <property type="evidence" value="ECO:0007669"/>
    <property type="project" value="UniProtKB-UniRule"/>
</dbReference>
<dbReference type="CDD" id="cd01995">
    <property type="entry name" value="QueC-like"/>
    <property type="match status" value="1"/>
</dbReference>
<dbReference type="FunFam" id="3.40.50.620:FF:000170">
    <property type="entry name" value="7-cyano-7-deazaguanine synthase"/>
    <property type="match status" value="1"/>
</dbReference>
<dbReference type="Gene3D" id="3.40.50.620">
    <property type="entry name" value="HUPs"/>
    <property type="match status" value="1"/>
</dbReference>
<dbReference type="HAMAP" id="MF_01633">
    <property type="entry name" value="QueC"/>
    <property type="match status" value="1"/>
</dbReference>
<dbReference type="InterPro" id="IPR018317">
    <property type="entry name" value="QueC"/>
</dbReference>
<dbReference type="InterPro" id="IPR014729">
    <property type="entry name" value="Rossmann-like_a/b/a_fold"/>
</dbReference>
<dbReference type="NCBIfam" id="TIGR00364">
    <property type="entry name" value="7-cyano-7-deazaguanine synthase QueC"/>
    <property type="match status" value="1"/>
</dbReference>
<dbReference type="PANTHER" id="PTHR42914">
    <property type="entry name" value="7-CYANO-7-DEAZAGUANINE SYNTHASE"/>
    <property type="match status" value="1"/>
</dbReference>
<dbReference type="PANTHER" id="PTHR42914:SF1">
    <property type="entry name" value="7-CYANO-7-DEAZAGUANINE SYNTHASE"/>
    <property type="match status" value="1"/>
</dbReference>
<dbReference type="Pfam" id="PF06508">
    <property type="entry name" value="QueC"/>
    <property type="match status" value="1"/>
</dbReference>
<dbReference type="PIRSF" id="PIRSF006293">
    <property type="entry name" value="ExsB"/>
    <property type="match status" value="1"/>
</dbReference>
<dbReference type="SUPFAM" id="SSF52402">
    <property type="entry name" value="Adenine nucleotide alpha hydrolases-like"/>
    <property type="match status" value="1"/>
</dbReference>
<feature type="chain" id="PRO_0000246859" description="7-cyano-7-deazaguanine synthase">
    <location>
        <begin position="1"/>
        <end position="242"/>
    </location>
</feature>
<feature type="region of interest" description="Disordered" evidence="2">
    <location>
        <begin position="1"/>
        <end position="22"/>
    </location>
</feature>
<feature type="binding site" evidence="1">
    <location>
        <begin position="32"/>
        <end position="42"/>
    </location>
    <ligand>
        <name>ATP</name>
        <dbReference type="ChEBI" id="CHEBI:30616"/>
    </ligand>
</feature>
<feature type="binding site" evidence="1">
    <location>
        <position position="212"/>
    </location>
    <ligand>
        <name>Zn(2+)</name>
        <dbReference type="ChEBI" id="CHEBI:29105"/>
    </ligand>
</feature>
<feature type="binding site" evidence="1">
    <location>
        <position position="221"/>
    </location>
    <ligand>
        <name>Zn(2+)</name>
        <dbReference type="ChEBI" id="CHEBI:29105"/>
    </ligand>
</feature>
<feature type="binding site" evidence="1">
    <location>
        <position position="224"/>
    </location>
    <ligand>
        <name>Zn(2+)</name>
        <dbReference type="ChEBI" id="CHEBI:29105"/>
    </ligand>
</feature>
<feature type="binding site" evidence="1">
    <location>
        <position position="227"/>
    </location>
    <ligand>
        <name>Zn(2+)</name>
        <dbReference type="ChEBI" id="CHEBI:29105"/>
    </ligand>
</feature>
<accession>Q72VK9</accession>
<sequence length="242" mass="26720">MNSSSNEKNKDLNRKNFSSKTDSSNNKAVVLLSGGLDSTTCLYQAIADGKEIQALSFDYGQRHKIELSYAKKVTRKLGIPHTIQKLKPELFLGSSLTQKSLHVPKNSLRKEEIPNTYVPGRNILFLSFAVSLAEGTGSDSIYIGVNSMDYSGYPDCRPEFIKMFEMAIQLGTKKGSQGPSIKILTPLQNLSKKEIVLLGNQLKVPFHLTFSCYDPKNGKACGKCDACLLRKKGFQETGVSEK</sequence>
<protein>
    <recommendedName>
        <fullName evidence="1">7-cyano-7-deazaguanine synthase</fullName>
        <ecNumber evidence="1">6.3.4.20</ecNumber>
    </recommendedName>
    <alternativeName>
        <fullName evidence="1">7-cyano-7-carbaguanine synthase</fullName>
    </alternativeName>
    <alternativeName>
        <fullName evidence="1">PreQ(0) synthase</fullName>
    </alternativeName>
    <alternativeName>
        <fullName evidence="1">Queuosine biosynthesis protein QueC</fullName>
    </alternativeName>
</protein>
<gene>
    <name evidence="1" type="primary">queC</name>
    <name type="ordered locus">LIC_10288</name>
</gene>
<keyword id="KW-0067">ATP-binding</keyword>
<keyword id="KW-0436">Ligase</keyword>
<keyword id="KW-0479">Metal-binding</keyword>
<keyword id="KW-0547">Nucleotide-binding</keyword>
<keyword id="KW-0671">Queuosine biosynthesis</keyword>
<keyword id="KW-0862">Zinc</keyword>
<reference key="1">
    <citation type="journal article" date="2004" name="J. Bacteriol.">
        <title>Comparative genomics of two Leptospira interrogans serovars reveals novel insights into physiology and pathogenesis.</title>
        <authorList>
            <person name="Nascimento A.L.T.O."/>
            <person name="Ko A.I."/>
            <person name="Martins E.A.L."/>
            <person name="Monteiro-Vitorello C.B."/>
            <person name="Ho P.L."/>
            <person name="Haake D.A."/>
            <person name="Verjovski-Almeida S."/>
            <person name="Hartskeerl R.A."/>
            <person name="Marques M.V."/>
            <person name="Oliveira M.C."/>
            <person name="Menck C.F.M."/>
            <person name="Leite L.C.C."/>
            <person name="Carrer H."/>
            <person name="Coutinho L.L."/>
            <person name="Degrave W.M."/>
            <person name="Dellagostin O.A."/>
            <person name="El-Dorry H."/>
            <person name="Ferro E.S."/>
            <person name="Ferro M.I.T."/>
            <person name="Furlan L.R."/>
            <person name="Gamberini M."/>
            <person name="Giglioti E.A."/>
            <person name="Goes-Neto A."/>
            <person name="Goldman G.H."/>
            <person name="Goldman M.H.S."/>
            <person name="Harakava R."/>
            <person name="Jeronimo S.M.B."/>
            <person name="Junqueira-de-Azevedo I.L.M."/>
            <person name="Kimura E.T."/>
            <person name="Kuramae E.E."/>
            <person name="Lemos E.G.M."/>
            <person name="Lemos M.V.F."/>
            <person name="Marino C.L."/>
            <person name="Nunes L.R."/>
            <person name="de Oliveira R.C."/>
            <person name="Pereira G.G."/>
            <person name="Reis M.S."/>
            <person name="Schriefer A."/>
            <person name="Siqueira W.J."/>
            <person name="Sommer P."/>
            <person name="Tsai S.M."/>
            <person name="Simpson A.J.G."/>
            <person name="Ferro J.A."/>
            <person name="Camargo L.E.A."/>
            <person name="Kitajima J.P."/>
            <person name="Setubal J.C."/>
            <person name="Van Sluys M.A."/>
        </authorList>
    </citation>
    <scope>NUCLEOTIDE SEQUENCE [LARGE SCALE GENOMIC DNA]</scope>
    <source>
        <strain>Fiocruz L1-130</strain>
    </source>
</reference>
<proteinExistence type="inferred from homology"/>